<accession>Q11JJ8</accession>
<organism>
    <name type="scientific">Chelativorans sp. (strain BNC1)</name>
    <dbReference type="NCBI Taxonomy" id="266779"/>
    <lineage>
        <taxon>Bacteria</taxon>
        <taxon>Pseudomonadati</taxon>
        <taxon>Pseudomonadota</taxon>
        <taxon>Alphaproteobacteria</taxon>
        <taxon>Hyphomicrobiales</taxon>
        <taxon>Phyllobacteriaceae</taxon>
        <taxon>Chelativorans</taxon>
    </lineage>
</organism>
<protein>
    <recommendedName>
        <fullName evidence="1">NADH-quinone oxidoreductase subunit I</fullName>
        <ecNumber evidence="1">7.1.1.-</ecNumber>
    </recommendedName>
    <alternativeName>
        <fullName evidence="1">NADH dehydrogenase I subunit I</fullName>
    </alternativeName>
    <alternativeName>
        <fullName evidence="1">NDH-1 subunit I</fullName>
    </alternativeName>
</protein>
<sequence length="163" mass="18541">MSALAQAAKSLLLKEFFGAVVLSMRQFFAPKATLNYPHEKGPLSPRFRGEHALRRYPNGEERCIACKLCEAICPAQAITIEAGPRRNDGTRRTVRYDIDMVKCIYCGFCQEACPVDAIVEGPNFEFATETREELYYDKDKLLANGDRWERELARNIALDAPYR</sequence>
<gene>
    <name evidence="1" type="primary">nuoI</name>
    <name type="ordered locus">Meso_1030</name>
</gene>
<dbReference type="EC" id="7.1.1.-" evidence="1"/>
<dbReference type="EMBL" id="CP000390">
    <property type="protein sequence ID" value="ABG62427.1"/>
    <property type="molecule type" value="Genomic_DNA"/>
</dbReference>
<dbReference type="SMR" id="Q11JJ8"/>
<dbReference type="STRING" id="266779.Meso_1030"/>
<dbReference type="KEGG" id="mes:Meso_1030"/>
<dbReference type="eggNOG" id="COG1143">
    <property type="taxonomic scope" value="Bacteria"/>
</dbReference>
<dbReference type="HOGENOM" id="CLU_067218_5_1_5"/>
<dbReference type="OrthoDB" id="9808559at2"/>
<dbReference type="GO" id="GO:0005886">
    <property type="term" value="C:plasma membrane"/>
    <property type="evidence" value="ECO:0007669"/>
    <property type="project" value="UniProtKB-SubCell"/>
</dbReference>
<dbReference type="GO" id="GO:0051539">
    <property type="term" value="F:4 iron, 4 sulfur cluster binding"/>
    <property type="evidence" value="ECO:0007669"/>
    <property type="project" value="UniProtKB-KW"/>
</dbReference>
<dbReference type="GO" id="GO:0005506">
    <property type="term" value="F:iron ion binding"/>
    <property type="evidence" value="ECO:0007669"/>
    <property type="project" value="UniProtKB-UniRule"/>
</dbReference>
<dbReference type="GO" id="GO:0050136">
    <property type="term" value="F:NADH:ubiquinone reductase (non-electrogenic) activity"/>
    <property type="evidence" value="ECO:0007669"/>
    <property type="project" value="UniProtKB-UniRule"/>
</dbReference>
<dbReference type="GO" id="GO:0048038">
    <property type="term" value="F:quinone binding"/>
    <property type="evidence" value="ECO:0007669"/>
    <property type="project" value="UniProtKB-KW"/>
</dbReference>
<dbReference type="GO" id="GO:0009060">
    <property type="term" value="P:aerobic respiration"/>
    <property type="evidence" value="ECO:0007669"/>
    <property type="project" value="TreeGrafter"/>
</dbReference>
<dbReference type="FunFam" id="3.30.70.3270:FF:000001">
    <property type="entry name" value="NADH-quinone oxidoreductase subunit I 1"/>
    <property type="match status" value="1"/>
</dbReference>
<dbReference type="Gene3D" id="3.30.70.3270">
    <property type="match status" value="1"/>
</dbReference>
<dbReference type="HAMAP" id="MF_01351">
    <property type="entry name" value="NDH1_NuoI"/>
    <property type="match status" value="1"/>
</dbReference>
<dbReference type="InterPro" id="IPR017896">
    <property type="entry name" value="4Fe4S_Fe-S-bd"/>
</dbReference>
<dbReference type="InterPro" id="IPR017900">
    <property type="entry name" value="4Fe4S_Fe_S_CS"/>
</dbReference>
<dbReference type="InterPro" id="IPR010226">
    <property type="entry name" value="NADH_quinone_OxRdtase_chainI"/>
</dbReference>
<dbReference type="NCBIfam" id="TIGR01971">
    <property type="entry name" value="NuoI"/>
    <property type="match status" value="1"/>
</dbReference>
<dbReference type="NCBIfam" id="NF004538">
    <property type="entry name" value="PRK05888.1-4"/>
    <property type="match status" value="1"/>
</dbReference>
<dbReference type="NCBIfam" id="NF004539">
    <property type="entry name" value="PRK05888.1-5"/>
    <property type="match status" value="1"/>
</dbReference>
<dbReference type="PANTHER" id="PTHR10849:SF20">
    <property type="entry name" value="NADH DEHYDROGENASE [UBIQUINONE] IRON-SULFUR PROTEIN 8, MITOCHONDRIAL"/>
    <property type="match status" value="1"/>
</dbReference>
<dbReference type="PANTHER" id="PTHR10849">
    <property type="entry name" value="NADH DEHYDROGENASE UBIQUINONE IRON-SULFUR PROTEIN 8, MITOCHONDRIAL"/>
    <property type="match status" value="1"/>
</dbReference>
<dbReference type="Pfam" id="PF12838">
    <property type="entry name" value="Fer4_7"/>
    <property type="match status" value="1"/>
</dbReference>
<dbReference type="SUPFAM" id="SSF54862">
    <property type="entry name" value="4Fe-4S ferredoxins"/>
    <property type="match status" value="1"/>
</dbReference>
<dbReference type="PROSITE" id="PS00198">
    <property type="entry name" value="4FE4S_FER_1"/>
    <property type="match status" value="2"/>
</dbReference>
<dbReference type="PROSITE" id="PS51379">
    <property type="entry name" value="4FE4S_FER_2"/>
    <property type="match status" value="2"/>
</dbReference>
<evidence type="ECO:0000255" key="1">
    <source>
        <dbReference type="HAMAP-Rule" id="MF_01351"/>
    </source>
</evidence>
<proteinExistence type="inferred from homology"/>
<name>NUOI_CHESB</name>
<keyword id="KW-0004">4Fe-4S</keyword>
<keyword id="KW-0997">Cell inner membrane</keyword>
<keyword id="KW-1003">Cell membrane</keyword>
<keyword id="KW-0408">Iron</keyword>
<keyword id="KW-0411">Iron-sulfur</keyword>
<keyword id="KW-0472">Membrane</keyword>
<keyword id="KW-0479">Metal-binding</keyword>
<keyword id="KW-0520">NAD</keyword>
<keyword id="KW-0874">Quinone</keyword>
<keyword id="KW-0677">Repeat</keyword>
<keyword id="KW-1278">Translocase</keyword>
<keyword id="KW-0830">Ubiquinone</keyword>
<feature type="chain" id="PRO_0000298509" description="NADH-quinone oxidoreductase subunit I">
    <location>
        <begin position="1"/>
        <end position="163"/>
    </location>
</feature>
<feature type="domain" description="4Fe-4S ferredoxin-type 1" evidence="1">
    <location>
        <begin position="53"/>
        <end position="83"/>
    </location>
</feature>
<feature type="domain" description="4Fe-4S ferredoxin-type 2" evidence="1">
    <location>
        <begin position="94"/>
        <end position="123"/>
    </location>
</feature>
<feature type="binding site" evidence="1">
    <location>
        <position position="63"/>
    </location>
    <ligand>
        <name>[4Fe-4S] cluster</name>
        <dbReference type="ChEBI" id="CHEBI:49883"/>
        <label>1</label>
    </ligand>
</feature>
<feature type="binding site" evidence="1">
    <location>
        <position position="66"/>
    </location>
    <ligand>
        <name>[4Fe-4S] cluster</name>
        <dbReference type="ChEBI" id="CHEBI:49883"/>
        <label>1</label>
    </ligand>
</feature>
<feature type="binding site" evidence="1">
    <location>
        <position position="69"/>
    </location>
    <ligand>
        <name>[4Fe-4S] cluster</name>
        <dbReference type="ChEBI" id="CHEBI:49883"/>
        <label>1</label>
    </ligand>
</feature>
<feature type="binding site" evidence="1">
    <location>
        <position position="73"/>
    </location>
    <ligand>
        <name>[4Fe-4S] cluster</name>
        <dbReference type="ChEBI" id="CHEBI:49883"/>
        <label>2</label>
    </ligand>
</feature>
<feature type="binding site" evidence="1">
    <location>
        <position position="103"/>
    </location>
    <ligand>
        <name>[4Fe-4S] cluster</name>
        <dbReference type="ChEBI" id="CHEBI:49883"/>
        <label>2</label>
    </ligand>
</feature>
<feature type="binding site" evidence="1">
    <location>
        <position position="106"/>
    </location>
    <ligand>
        <name>[4Fe-4S] cluster</name>
        <dbReference type="ChEBI" id="CHEBI:49883"/>
        <label>2</label>
    </ligand>
</feature>
<feature type="binding site" evidence="1">
    <location>
        <position position="109"/>
    </location>
    <ligand>
        <name>[4Fe-4S] cluster</name>
        <dbReference type="ChEBI" id="CHEBI:49883"/>
        <label>2</label>
    </ligand>
</feature>
<feature type="binding site" evidence="1">
    <location>
        <position position="113"/>
    </location>
    <ligand>
        <name>[4Fe-4S] cluster</name>
        <dbReference type="ChEBI" id="CHEBI:49883"/>
        <label>1</label>
    </ligand>
</feature>
<reference key="1">
    <citation type="submission" date="2006-06" db="EMBL/GenBank/DDBJ databases">
        <title>Complete sequence of chromosome of Mesorhizobium sp. BNC1.</title>
        <authorList>
            <consortium name="US DOE Joint Genome Institute"/>
            <person name="Copeland A."/>
            <person name="Lucas S."/>
            <person name="Lapidus A."/>
            <person name="Barry K."/>
            <person name="Detter J.C."/>
            <person name="Glavina del Rio T."/>
            <person name="Hammon N."/>
            <person name="Israni S."/>
            <person name="Dalin E."/>
            <person name="Tice H."/>
            <person name="Pitluck S."/>
            <person name="Chertkov O."/>
            <person name="Brettin T."/>
            <person name="Bruce D."/>
            <person name="Han C."/>
            <person name="Tapia R."/>
            <person name="Gilna P."/>
            <person name="Schmutz J."/>
            <person name="Larimer F."/>
            <person name="Land M."/>
            <person name="Hauser L."/>
            <person name="Kyrpides N."/>
            <person name="Mikhailova N."/>
            <person name="Richardson P."/>
        </authorList>
    </citation>
    <scope>NUCLEOTIDE SEQUENCE [LARGE SCALE GENOMIC DNA]</scope>
    <source>
        <strain>BNC1</strain>
    </source>
</reference>
<comment type="function">
    <text evidence="1">NDH-1 shuttles electrons from NADH, via FMN and iron-sulfur (Fe-S) centers, to quinones in the respiratory chain. The immediate electron acceptor for the enzyme in this species is believed to be ubiquinone. Couples the redox reaction to proton translocation (for every two electrons transferred, four hydrogen ions are translocated across the cytoplasmic membrane), and thus conserves the redox energy in a proton gradient.</text>
</comment>
<comment type="catalytic activity">
    <reaction evidence="1">
        <text>a quinone + NADH + 5 H(+)(in) = a quinol + NAD(+) + 4 H(+)(out)</text>
        <dbReference type="Rhea" id="RHEA:57888"/>
        <dbReference type="ChEBI" id="CHEBI:15378"/>
        <dbReference type="ChEBI" id="CHEBI:24646"/>
        <dbReference type="ChEBI" id="CHEBI:57540"/>
        <dbReference type="ChEBI" id="CHEBI:57945"/>
        <dbReference type="ChEBI" id="CHEBI:132124"/>
    </reaction>
</comment>
<comment type="cofactor">
    <cofactor evidence="1">
        <name>[4Fe-4S] cluster</name>
        <dbReference type="ChEBI" id="CHEBI:49883"/>
    </cofactor>
    <text evidence="1">Binds 2 [4Fe-4S] clusters per subunit.</text>
</comment>
<comment type="subunit">
    <text evidence="1">NDH-1 is composed of 14 different subunits. Subunits NuoA, H, J, K, L, M, N constitute the membrane sector of the complex.</text>
</comment>
<comment type="subcellular location">
    <subcellularLocation>
        <location evidence="1">Cell inner membrane</location>
        <topology evidence="1">Peripheral membrane protein</topology>
    </subcellularLocation>
</comment>
<comment type="similarity">
    <text evidence="1">Belongs to the complex I 23 kDa subunit family.</text>
</comment>